<organism>
    <name type="scientific">Homo sapiens</name>
    <name type="common">Human</name>
    <dbReference type="NCBI Taxonomy" id="9606"/>
    <lineage>
        <taxon>Eukaryota</taxon>
        <taxon>Metazoa</taxon>
        <taxon>Chordata</taxon>
        <taxon>Craniata</taxon>
        <taxon>Vertebrata</taxon>
        <taxon>Euteleostomi</taxon>
        <taxon>Mammalia</taxon>
        <taxon>Eutheria</taxon>
        <taxon>Euarchontoglires</taxon>
        <taxon>Primates</taxon>
        <taxon>Haplorrhini</taxon>
        <taxon>Catarrhini</taxon>
        <taxon>Hominidae</taxon>
        <taxon>Homo</taxon>
    </lineage>
</organism>
<comment type="function">
    <text evidence="3">Odorant receptor.</text>
</comment>
<comment type="subcellular location">
    <subcellularLocation>
        <location>Cell membrane</location>
        <topology>Multi-pass membrane protein</topology>
    </subcellularLocation>
</comment>
<comment type="similarity">
    <text evidence="2">Belongs to the G-protein coupled receptor 1 family.</text>
</comment>
<comment type="caution">
    <text evidence="3">It is uncertain whether Met-1 or Met-12 is the initiator.</text>
</comment>
<comment type="online information" name="Human Olfactory Receptor Data Exploratorium (HORDE)">
    <link uri="http://genome.weizmann.ac.il/horde/card/index/symbol:OR10R2"/>
</comment>
<proteinExistence type="inferred from homology"/>
<sequence>MPQILIFTYLNMFYFFPPLQILAENLTMVTEFLLLGFSSLGEIQLALFVVFLFLYLVILSGNVTIISVIHLDKSLHTPMYFFLGILSTSETFYTFVILPKMLINLLSVARTISFNCCALQMFFFLGFAITNCLLLGVMGYDRYAAICHPLHYPTLMSWQVCGKLAAACAIGGFLASLTVVNLVFSLPFCSANKVNHYFCDISAVILLACTNTDVNEFVIFICGVLVLVVPFLFICVSYLCILRTILKIPSAEGRRKAFSTCASHLSVVIVHYGCASFIYLRPTANYVSNKDRLVTVTYTIVTPLLNPMVYSLRNKDVQLAIRKVLGKKGSLKLYN</sequence>
<protein>
    <recommendedName>
        <fullName>Olfactory receptor 10R2</fullName>
    </recommendedName>
    <alternativeName>
        <fullName>Olfactory receptor OR1-8</fullName>
    </alternativeName>
</protein>
<reference key="1">
    <citation type="submission" date="2001-07" db="EMBL/GenBank/DDBJ databases">
        <title>Genome-wide discovery and analysis of human seven transmembrane helix receptor genes.</title>
        <authorList>
            <person name="Suwa M."/>
            <person name="Sato T."/>
            <person name="Okouchi I."/>
            <person name="Arita M."/>
            <person name="Futami K."/>
            <person name="Matsumoto S."/>
            <person name="Tsutsumi S."/>
            <person name="Aburatani H."/>
            <person name="Asai K."/>
            <person name="Akiyama Y."/>
        </authorList>
    </citation>
    <scope>NUCLEOTIDE SEQUENCE [GENOMIC DNA]</scope>
</reference>
<reference key="2">
    <citation type="journal article" date="2006" name="Nature">
        <title>The DNA sequence and biological annotation of human chromosome 1.</title>
        <authorList>
            <person name="Gregory S.G."/>
            <person name="Barlow K.F."/>
            <person name="McLay K.E."/>
            <person name="Kaul R."/>
            <person name="Swarbreck D."/>
            <person name="Dunham A."/>
            <person name="Scott C.E."/>
            <person name="Howe K.L."/>
            <person name="Woodfine K."/>
            <person name="Spencer C.C.A."/>
            <person name="Jones M.C."/>
            <person name="Gillson C."/>
            <person name="Searle S."/>
            <person name="Zhou Y."/>
            <person name="Kokocinski F."/>
            <person name="McDonald L."/>
            <person name="Evans R."/>
            <person name="Phillips K."/>
            <person name="Atkinson A."/>
            <person name="Cooper R."/>
            <person name="Jones C."/>
            <person name="Hall R.E."/>
            <person name="Andrews T.D."/>
            <person name="Lloyd C."/>
            <person name="Ainscough R."/>
            <person name="Almeida J.P."/>
            <person name="Ambrose K.D."/>
            <person name="Anderson F."/>
            <person name="Andrew R.W."/>
            <person name="Ashwell R.I.S."/>
            <person name="Aubin K."/>
            <person name="Babbage A.K."/>
            <person name="Bagguley C.L."/>
            <person name="Bailey J."/>
            <person name="Beasley H."/>
            <person name="Bethel G."/>
            <person name="Bird C.P."/>
            <person name="Bray-Allen S."/>
            <person name="Brown J.Y."/>
            <person name="Brown A.J."/>
            <person name="Buckley D."/>
            <person name="Burton J."/>
            <person name="Bye J."/>
            <person name="Carder C."/>
            <person name="Chapman J.C."/>
            <person name="Clark S.Y."/>
            <person name="Clarke G."/>
            <person name="Clee C."/>
            <person name="Cobley V."/>
            <person name="Collier R.E."/>
            <person name="Corby N."/>
            <person name="Coville G.J."/>
            <person name="Davies J."/>
            <person name="Deadman R."/>
            <person name="Dunn M."/>
            <person name="Earthrowl M."/>
            <person name="Ellington A.G."/>
            <person name="Errington H."/>
            <person name="Frankish A."/>
            <person name="Frankland J."/>
            <person name="French L."/>
            <person name="Garner P."/>
            <person name="Garnett J."/>
            <person name="Gay L."/>
            <person name="Ghori M.R.J."/>
            <person name="Gibson R."/>
            <person name="Gilby L.M."/>
            <person name="Gillett W."/>
            <person name="Glithero R.J."/>
            <person name="Grafham D.V."/>
            <person name="Griffiths C."/>
            <person name="Griffiths-Jones S."/>
            <person name="Grocock R."/>
            <person name="Hammond S."/>
            <person name="Harrison E.S.I."/>
            <person name="Hart E."/>
            <person name="Haugen E."/>
            <person name="Heath P.D."/>
            <person name="Holmes S."/>
            <person name="Holt K."/>
            <person name="Howden P.J."/>
            <person name="Hunt A.R."/>
            <person name="Hunt S.E."/>
            <person name="Hunter G."/>
            <person name="Isherwood J."/>
            <person name="James R."/>
            <person name="Johnson C."/>
            <person name="Johnson D."/>
            <person name="Joy A."/>
            <person name="Kay M."/>
            <person name="Kershaw J.K."/>
            <person name="Kibukawa M."/>
            <person name="Kimberley A.M."/>
            <person name="King A."/>
            <person name="Knights A.J."/>
            <person name="Lad H."/>
            <person name="Laird G."/>
            <person name="Lawlor S."/>
            <person name="Leongamornlert D.A."/>
            <person name="Lloyd D.M."/>
            <person name="Loveland J."/>
            <person name="Lovell J."/>
            <person name="Lush M.J."/>
            <person name="Lyne R."/>
            <person name="Martin S."/>
            <person name="Mashreghi-Mohammadi M."/>
            <person name="Matthews L."/>
            <person name="Matthews N.S.W."/>
            <person name="McLaren S."/>
            <person name="Milne S."/>
            <person name="Mistry S."/>
            <person name="Moore M.J.F."/>
            <person name="Nickerson T."/>
            <person name="O'Dell C.N."/>
            <person name="Oliver K."/>
            <person name="Palmeiri A."/>
            <person name="Palmer S.A."/>
            <person name="Parker A."/>
            <person name="Patel D."/>
            <person name="Pearce A.V."/>
            <person name="Peck A.I."/>
            <person name="Pelan S."/>
            <person name="Phelps K."/>
            <person name="Phillimore B.J."/>
            <person name="Plumb R."/>
            <person name="Rajan J."/>
            <person name="Raymond C."/>
            <person name="Rouse G."/>
            <person name="Saenphimmachak C."/>
            <person name="Sehra H.K."/>
            <person name="Sheridan E."/>
            <person name="Shownkeen R."/>
            <person name="Sims S."/>
            <person name="Skuce C.D."/>
            <person name="Smith M."/>
            <person name="Steward C."/>
            <person name="Subramanian S."/>
            <person name="Sycamore N."/>
            <person name="Tracey A."/>
            <person name="Tromans A."/>
            <person name="Van Helmond Z."/>
            <person name="Wall M."/>
            <person name="Wallis J.M."/>
            <person name="White S."/>
            <person name="Whitehead S.L."/>
            <person name="Wilkinson J.E."/>
            <person name="Willey D.L."/>
            <person name="Williams H."/>
            <person name="Wilming L."/>
            <person name="Wray P.W."/>
            <person name="Wu Z."/>
            <person name="Coulson A."/>
            <person name="Vaudin M."/>
            <person name="Sulston J.E."/>
            <person name="Durbin R.M."/>
            <person name="Hubbard T."/>
            <person name="Wooster R."/>
            <person name="Dunham I."/>
            <person name="Carter N.P."/>
            <person name="McVean G."/>
            <person name="Ross M.T."/>
            <person name="Harrow J."/>
            <person name="Olson M.V."/>
            <person name="Beck S."/>
            <person name="Rogers J."/>
            <person name="Bentley D.R."/>
        </authorList>
    </citation>
    <scope>NUCLEOTIDE SEQUENCE [LARGE SCALE GENOMIC DNA]</scope>
</reference>
<reference key="3">
    <citation type="journal article" date="2002" name="Genomics">
        <title>DEFOG: a practical scheme for deciphering families of genes.</title>
        <authorList>
            <person name="Fuchs T."/>
            <person name="Malecova B."/>
            <person name="Linhart C."/>
            <person name="Sharan R."/>
            <person name="Khen M."/>
            <person name="Herwig R."/>
            <person name="Shmulevich D."/>
            <person name="Elkon R."/>
            <person name="Steinfath M."/>
            <person name="O'Brien J.K."/>
            <person name="Radelof U."/>
            <person name="Lehrach H."/>
            <person name="Lancet D."/>
            <person name="Shamir R."/>
        </authorList>
    </citation>
    <scope>NUCLEOTIDE SEQUENCE [GENOMIC DNA] OF 88-303</scope>
</reference>
<reference key="4">
    <citation type="journal article" date="2004" name="Proc. Natl. Acad. Sci. U.S.A.">
        <title>The human olfactory receptor gene family.</title>
        <authorList>
            <person name="Malnic B."/>
            <person name="Godfrey P.A."/>
            <person name="Buck L.B."/>
        </authorList>
    </citation>
    <scope>IDENTIFICATION</scope>
</reference>
<reference key="5">
    <citation type="journal article" date="2004" name="Proc. Natl. Acad. Sci. U.S.A.">
        <authorList>
            <person name="Malnic B."/>
            <person name="Godfrey P.A."/>
            <person name="Buck L.B."/>
        </authorList>
    </citation>
    <scope>ERRATUM OF PUBMED:14983052</scope>
</reference>
<gene>
    <name type="primary">OR10R2</name>
</gene>
<accession>Q8NGX6</accession>
<accession>Q5VWM8</accession>
<accession>Q6IFS1</accession>
<accession>Q96R61</accession>
<keyword id="KW-1003">Cell membrane</keyword>
<keyword id="KW-1015">Disulfide bond</keyword>
<keyword id="KW-0297">G-protein coupled receptor</keyword>
<keyword id="KW-0325">Glycoprotein</keyword>
<keyword id="KW-0472">Membrane</keyword>
<keyword id="KW-0552">Olfaction</keyword>
<keyword id="KW-0675">Receptor</keyword>
<keyword id="KW-1185">Reference proteome</keyword>
<keyword id="KW-0716">Sensory transduction</keyword>
<keyword id="KW-0807">Transducer</keyword>
<keyword id="KW-0812">Transmembrane</keyword>
<keyword id="KW-1133">Transmembrane helix</keyword>
<evidence type="ECO:0000255" key="1"/>
<evidence type="ECO:0000255" key="2">
    <source>
        <dbReference type="PROSITE-ProRule" id="PRU00521"/>
    </source>
</evidence>
<evidence type="ECO:0000305" key="3"/>
<name>O10R2_HUMAN</name>
<dbReference type="EMBL" id="AB065640">
    <property type="protein sequence ID" value="BAC05866.1"/>
    <property type="molecule type" value="Genomic_DNA"/>
</dbReference>
<dbReference type="EMBL" id="AL365440">
    <property type="status" value="NOT_ANNOTATED_CDS"/>
    <property type="molecule type" value="Genomic_DNA"/>
</dbReference>
<dbReference type="EMBL" id="AF399582">
    <property type="protein sequence ID" value="AAK95067.1"/>
    <property type="molecule type" value="Genomic_DNA"/>
</dbReference>
<dbReference type="EMBL" id="BK004191">
    <property type="protein sequence ID" value="DAA04589.1"/>
    <property type="molecule type" value="Genomic_DNA"/>
</dbReference>
<dbReference type="RefSeq" id="NP_001004472.1">
    <property type="nucleotide sequence ID" value="NM_001004472.1"/>
</dbReference>
<dbReference type="SMR" id="Q8NGX6"/>
<dbReference type="FunCoup" id="Q8NGX6">
    <property type="interactions" value="417"/>
</dbReference>
<dbReference type="STRING" id="9606.ENSP00000357134"/>
<dbReference type="GlyCosmos" id="Q8NGX6">
    <property type="glycosylation" value="1 site, No reported glycans"/>
</dbReference>
<dbReference type="GlyGen" id="Q8NGX6">
    <property type="glycosylation" value="3 sites, 1 O-linked glycan (2 sites)"/>
</dbReference>
<dbReference type="iPTMnet" id="Q8NGX6"/>
<dbReference type="PhosphoSitePlus" id="Q8NGX6"/>
<dbReference type="BioMuta" id="OR10R2"/>
<dbReference type="DMDM" id="223590254"/>
<dbReference type="PaxDb" id="9606-ENSP00000357134"/>
<dbReference type="Antibodypedia" id="20459">
    <property type="antibodies" value="113 antibodies from 25 providers"/>
</dbReference>
<dbReference type="DNASU" id="343406"/>
<dbReference type="GeneID" id="343406"/>
<dbReference type="KEGG" id="hsa:343406"/>
<dbReference type="UCSC" id="uc010pik.2">
    <property type="organism name" value="human"/>
</dbReference>
<dbReference type="AGR" id="HGNC:14820"/>
<dbReference type="CTD" id="343406"/>
<dbReference type="GeneCards" id="OR10R2"/>
<dbReference type="HGNC" id="HGNC:14820">
    <property type="gene designation" value="OR10R2"/>
</dbReference>
<dbReference type="neXtProt" id="NX_Q8NGX6"/>
<dbReference type="PharmGKB" id="PA31997"/>
<dbReference type="VEuPathDB" id="HostDB:ENSG00000198965"/>
<dbReference type="eggNOG" id="ENOG502QVH7">
    <property type="taxonomic scope" value="Eukaryota"/>
</dbReference>
<dbReference type="HOGENOM" id="CLU_012526_1_0_1"/>
<dbReference type="InParanoid" id="Q8NGX6"/>
<dbReference type="OrthoDB" id="9975554at2759"/>
<dbReference type="PAN-GO" id="Q8NGX6">
    <property type="GO annotations" value="4 GO annotations based on evolutionary models"/>
</dbReference>
<dbReference type="PhylomeDB" id="Q8NGX6"/>
<dbReference type="TreeFam" id="TF337249"/>
<dbReference type="PathwayCommons" id="Q8NGX6"/>
<dbReference type="Reactome" id="R-HSA-9752946">
    <property type="pathway name" value="Expression and translocation of olfactory receptors"/>
</dbReference>
<dbReference type="BioGRID-ORCS" id="343406">
    <property type="hits" value="8 hits in 750 CRISPR screens"/>
</dbReference>
<dbReference type="GeneWiki" id="OR10R2"/>
<dbReference type="GenomeRNAi" id="343406"/>
<dbReference type="Pharos" id="Q8NGX6">
    <property type="development level" value="Tdark"/>
</dbReference>
<dbReference type="PRO" id="PR:Q8NGX6"/>
<dbReference type="Proteomes" id="UP000005640">
    <property type="component" value="Chromosome 1"/>
</dbReference>
<dbReference type="RNAct" id="Q8NGX6">
    <property type="molecule type" value="protein"/>
</dbReference>
<dbReference type="GO" id="GO:0016020">
    <property type="term" value="C:membrane"/>
    <property type="evidence" value="ECO:0000318"/>
    <property type="project" value="GO_Central"/>
</dbReference>
<dbReference type="GO" id="GO:0005886">
    <property type="term" value="C:plasma membrane"/>
    <property type="evidence" value="ECO:0007669"/>
    <property type="project" value="UniProtKB-SubCell"/>
</dbReference>
<dbReference type="GO" id="GO:0004930">
    <property type="term" value="F:G protein-coupled receptor activity"/>
    <property type="evidence" value="ECO:0007669"/>
    <property type="project" value="UniProtKB-KW"/>
</dbReference>
<dbReference type="GO" id="GO:0005549">
    <property type="term" value="F:odorant binding"/>
    <property type="evidence" value="ECO:0000318"/>
    <property type="project" value="GO_Central"/>
</dbReference>
<dbReference type="GO" id="GO:0004984">
    <property type="term" value="F:olfactory receptor activity"/>
    <property type="evidence" value="ECO:0000318"/>
    <property type="project" value="GO_Central"/>
</dbReference>
<dbReference type="GO" id="GO:0050911">
    <property type="term" value="P:detection of chemical stimulus involved in sensory perception of smell"/>
    <property type="evidence" value="ECO:0000318"/>
    <property type="project" value="GO_Central"/>
</dbReference>
<dbReference type="CDD" id="cd15225">
    <property type="entry name" value="7tmA_OR10A-like"/>
    <property type="match status" value="1"/>
</dbReference>
<dbReference type="FunFam" id="1.20.1070.10:FF:000001">
    <property type="entry name" value="Olfactory receptor"/>
    <property type="match status" value="1"/>
</dbReference>
<dbReference type="Gene3D" id="1.20.1070.10">
    <property type="entry name" value="Rhodopsin 7-helix transmembrane proteins"/>
    <property type="match status" value="1"/>
</dbReference>
<dbReference type="InterPro" id="IPR000276">
    <property type="entry name" value="GPCR_Rhodpsn"/>
</dbReference>
<dbReference type="InterPro" id="IPR017452">
    <property type="entry name" value="GPCR_Rhodpsn_7TM"/>
</dbReference>
<dbReference type="InterPro" id="IPR000725">
    <property type="entry name" value="Olfact_rcpt"/>
</dbReference>
<dbReference type="PANTHER" id="PTHR26453">
    <property type="entry name" value="OLFACTORY RECEPTOR"/>
    <property type="match status" value="1"/>
</dbReference>
<dbReference type="Pfam" id="PF13853">
    <property type="entry name" value="7tm_4"/>
    <property type="match status" value="1"/>
</dbReference>
<dbReference type="PRINTS" id="PR00237">
    <property type="entry name" value="GPCRRHODOPSN"/>
</dbReference>
<dbReference type="PRINTS" id="PR00245">
    <property type="entry name" value="OLFACTORYR"/>
</dbReference>
<dbReference type="SUPFAM" id="SSF81321">
    <property type="entry name" value="Family A G protein-coupled receptor-like"/>
    <property type="match status" value="1"/>
</dbReference>
<dbReference type="PROSITE" id="PS00237">
    <property type="entry name" value="G_PROTEIN_RECEP_F1_1"/>
    <property type="match status" value="1"/>
</dbReference>
<dbReference type="PROSITE" id="PS50262">
    <property type="entry name" value="G_PROTEIN_RECEP_F1_2"/>
    <property type="match status" value="1"/>
</dbReference>
<feature type="chain" id="PRO_0000150715" description="Olfactory receptor 10R2">
    <location>
        <begin position="1"/>
        <end position="335"/>
    </location>
</feature>
<feature type="topological domain" description="Extracellular" evidence="1">
    <location>
        <begin position="1"/>
        <end position="45"/>
    </location>
</feature>
<feature type="transmembrane region" description="Helical; Name=1" evidence="1">
    <location>
        <begin position="46"/>
        <end position="66"/>
    </location>
</feature>
<feature type="topological domain" description="Cytoplasmic" evidence="1">
    <location>
        <begin position="67"/>
        <end position="74"/>
    </location>
</feature>
<feature type="transmembrane region" description="Helical; Name=2" evidence="1">
    <location>
        <begin position="75"/>
        <end position="95"/>
    </location>
</feature>
<feature type="topological domain" description="Extracellular" evidence="1">
    <location>
        <begin position="96"/>
        <end position="119"/>
    </location>
</feature>
<feature type="transmembrane region" description="Helical; Name=3" evidence="1">
    <location>
        <begin position="120"/>
        <end position="140"/>
    </location>
</feature>
<feature type="topological domain" description="Cytoplasmic" evidence="1">
    <location>
        <begin position="141"/>
        <end position="159"/>
    </location>
</feature>
<feature type="transmembrane region" description="Helical; Name=4" evidence="1">
    <location>
        <begin position="160"/>
        <end position="180"/>
    </location>
</feature>
<feature type="topological domain" description="Extracellular" evidence="1">
    <location>
        <begin position="181"/>
        <end position="217"/>
    </location>
</feature>
<feature type="transmembrane region" description="Helical; Name=5" evidence="1">
    <location>
        <begin position="218"/>
        <end position="237"/>
    </location>
</feature>
<feature type="topological domain" description="Cytoplasmic" evidence="1">
    <location>
        <begin position="238"/>
        <end position="257"/>
    </location>
</feature>
<feature type="transmembrane region" description="Helical; Name=6" evidence="1">
    <location>
        <begin position="258"/>
        <end position="278"/>
    </location>
</feature>
<feature type="topological domain" description="Extracellular" evidence="1">
    <location>
        <begin position="279"/>
        <end position="291"/>
    </location>
</feature>
<feature type="transmembrane region" description="Helical; Name=7" evidence="1">
    <location>
        <begin position="292"/>
        <end position="312"/>
    </location>
</feature>
<feature type="topological domain" description="Cytoplasmic" evidence="1">
    <location>
        <begin position="313"/>
        <end position="335"/>
    </location>
</feature>
<feature type="glycosylation site" description="N-linked (GlcNAc...) asparagine" evidence="1">
    <location>
        <position position="25"/>
    </location>
</feature>
<feature type="disulfide bond" evidence="2">
    <location>
        <begin position="117"/>
        <end position="209"/>
    </location>
</feature>
<feature type="sequence variant" id="VAR_054355" description="In dbSNP:rs3820678.">
    <original>A</original>
    <variation>T</variation>
    <location>
        <position position="191"/>
    </location>
</feature>
<feature type="sequence variant" id="VAR_054356" description="In dbSNP:rs6679056.">
    <original>E</original>
    <variation>G</variation>
    <location>
        <position position="216"/>
    </location>
</feature>
<feature type="sequence variant" id="VAR_054357" description="In dbSNP:rs1418843.">
    <original>L</original>
    <variation>F</variation>
    <location>
        <position position="239"/>
    </location>
</feature>